<reference key="1">
    <citation type="journal article" date="2005" name="Genome Res.">
        <title>Complete genome sequence of the hyperthermophilic archaeon Thermococcus kodakaraensis KOD1 and comparison with Pyrococcus genomes.</title>
        <authorList>
            <person name="Fukui T."/>
            <person name="Atomi H."/>
            <person name="Kanai T."/>
            <person name="Matsumi R."/>
            <person name="Fujiwara S."/>
            <person name="Imanaka T."/>
        </authorList>
    </citation>
    <scope>NUCLEOTIDE SEQUENCE [LARGE SCALE GENOMIC DNA]</scope>
    <source>
        <strain>ATCC BAA-918 / JCM 12380 / KOD1</strain>
    </source>
</reference>
<reference key="2">
    <citation type="journal article" date="2014" name="J. Bacteriol.">
        <title>Identification of a novel aminopropyltransferase involved in the synthesis of branched-chain polyamines in hyperthermophiles.</title>
        <authorList>
            <person name="Okada K."/>
            <person name="Hidese R."/>
            <person name="Fukuda W."/>
            <person name="Niitsu M."/>
            <person name="Takao K."/>
            <person name="Horai Y."/>
            <person name="Umezawa N."/>
            <person name="Higuchi T."/>
            <person name="Oshima T."/>
            <person name="Yoshikawa Y."/>
            <person name="Imanaka T."/>
            <person name="Fujiwara S."/>
        </authorList>
    </citation>
    <scope>FUNCTION</scope>
    <scope>CATALYTIC ACTIVITY</scope>
    <scope>PATHWAY</scope>
    <scope>SUBCELLULAR LOCATION</scope>
    <scope>DISRUPTION PHENOTYPE</scope>
    <source>
        <strain>ATCC BAA-918 / JCM 12380 / KOD1</strain>
    </source>
</reference>
<gene>
    <name evidence="1 3" type="primary">bpsA</name>
    <name evidence="5" type="ordered locus">TK1691</name>
</gene>
<protein>
    <recommendedName>
        <fullName evidence="1 4">N(4)-bis(aminopropyl)spermidine synthase</fullName>
        <ecNumber evidence="1 2">2.5.1.128</ecNumber>
    </recommendedName>
    <alternativeName>
        <fullName evidence="1 3">Branched-chain polyamine synthase A</fullName>
    </alternativeName>
</protein>
<comment type="function">
    <text evidence="2">Involved in the biosynthesis of branched-chain polyamines, which support the growth of thermophiles under high-temperature conditions. Catalyzes the sequential condensation of spermidine with the aminopropyl groups of decarboxylated S-adenosylmethionines to produce N(4)-bis(aminopropyl)spermidine via N(4)-aminopropylspermidine. Can also use spermine to produce N(4)-aminopropylspermine.</text>
</comment>
<comment type="catalytic activity">
    <reaction evidence="1 2">
        <text>2 S-adenosyl 3-(methylsulfanyl)propylamine + spermidine = N(4)-bis(aminopropyl)spermidine + 2 S-methyl-5'-thioadenosine + 2 H(+)</text>
        <dbReference type="Rhea" id="RHEA:44132"/>
        <dbReference type="ChEBI" id="CHEBI:15378"/>
        <dbReference type="ChEBI" id="CHEBI:17509"/>
        <dbReference type="ChEBI" id="CHEBI:57443"/>
        <dbReference type="ChEBI" id="CHEBI:57834"/>
        <dbReference type="ChEBI" id="CHEBI:82771"/>
        <dbReference type="EC" id="2.5.1.128"/>
    </reaction>
</comment>
<comment type="pathway">
    <text evidence="1 2">Amine and polyamine biosynthesis.</text>
</comment>
<comment type="subcellular location">
    <subcellularLocation>
        <location evidence="1 2">Cytoplasm</location>
    </subcellularLocation>
</comment>
<comment type="disruption phenotype">
    <text evidence="2">Grows at 85 degrees Celsius with a slightly longer lag phase, but is unable to grow at 93 degrees Celsius.</text>
</comment>
<comment type="similarity">
    <text evidence="1 4">Belongs to the branched-chain polyamine synthase family.</text>
</comment>
<accession>Q5JIZ3</accession>
<sequence length="351" mass="40229">MREIIERVKEKTTIPVYERTIENVLSAIQASGDVWRIVDLSEEPLPLVVAVVTALYELGYVAFENNQVILTRKGKELVEKYGIGPRADYTCSHCQGRTVEIDAFSELLEQFKEITRDRPEPAHQFDQAYVTPETTVARVALMHSRGDLENKEVFVLGDDDLTSVALMLSGLPKRIAVLDIDERLTKFIEKAADEIGYENIEIFTFDLRKPLPDYALHKFDTFITDPPETVEAIRAFVGRGIATLKGPGCAGYFGITRRESSLDKWREIQRVLLNEFGVVITDIIRNFNEYVNWGYVEETRAWRLLPIKVKPSYNWYKSYMFRIQTLEGSKGFEDEITVGQELYDDEESSTT</sequence>
<evidence type="ECO:0000255" key="1">
    <source>
        <dbReference type="HAMAP-Rule" id="MF_01947"/>
    </source>
</evidence>
<evidence type="ECO:0000269" key="2">
    <source>
    </source>
</evidence>
<evidence type="ECO:0000303" key="3">
    <source>
    </source>
</evidence>
<evidence type="ECO:0000305" key="4"/>
<evidence type="ECO:0000312" key="5">
    <source>
        <dbReference type="EMBL" id="BAD85880.1"/>
    </source>
</evidence>
<evidence type="ECO:0007829" key="6">
    <source>
        <dbReference type="PDB" id="5XNC"/>
    </source>
</evidence>
<organism>
    <name type="scientific">Thermococcus kodakarensis (strain ATCC BAA-918 / JCM 12380 / KOD1)</name>
    <name type="common">Pyrococcus kodakaraensis (strain KOD1)</name>
    <dbReference type="NCBI Taxonomy" id="69014"/>
    <lineage>
        <taxon>Archaea</taxon>
        <taxon>Methanobacteriati</taxon>
        <taxon>Methanobacteriota</taxon>
        <taxon>Thermococci</taxon>
        <taxon>Thermococcales</taxon>
        <taxon>Thermococcaceae</taxon>
        <taxon>Thermococcus</taxon>
    </lineage>
</organism>
<feature type="chain" id="PRO_0000432214" description="N(4)-bis(aminopropyl)spermidine synthase">
    <location>
        <begin position="1"/>
        <end position="351"/>
    </location>
</feature>
<feature type="helix" evidence="6">
    <location>
        <begin position="1"/>
        <end position="9"/>
    </location>
</feature>
<feature type="helix" evidence="6">
    <location>
        <begin position="18"/>
        <end position="30"/>
    </location>
</feature>
<feature type="helix" evidence="6">
    <location>
        <begin position="34"/>
        <end position="41"/>
    </location>
</feature>
<feature type="helix" evidence="6">
    <location>
        <begin position="45"/>
        <end position="57"/>
    </location>
</feature>
<feature type="strand" evidence="6">
    <location>
        <begin position="60"/>
        <end position="64"/>
    </location>
</feature>
<feature type="strand" evidence="6">
    <location>
        <begin position="67"/>
        <end position="70"/>
    </location>
</feature>
<feature type="helix" evidence="6">
    <location>
        <begin position="72"/>
        <end position="81"/>
    </location>
</feature>
<feature type="turn" evidence="6">
    <location>
        <begin position="92"/>
        <end position="96"/>
    </location>
</feature>
<feature type="strand" evidence="6">
    <location>
        <begin position="97"/>
        <end position="99"/>
    </location>
</feature>
<feature type="helix" evidence="6">
    <location>
        <begin position="102"/>
        <end position="104"/>
    </location>
</feature>
<feature type="helix" evidence="6">
    <location>
        <begin position="105"/>
        <end position="114"/>
    </location>
</feature>
<feature type="turn" evidence="6">
    <location>
        <begin position="115"/>
        <end position="117"/>
    </location>
</feature>
<feature type="helix" evidence="6">
    <location>
        <begin position="123"/>
        <end position="125"/>
    </location>
</feature>
<feature type="helix" evidence="6">
    <location>
        <begin position="132"/>
        <end position="144"/>
    </location>
</feature>
<feature type="strand" evidence="6">
    <location>
        <begin position="152"/>
        <end position="156"/>
    </location>
</feature>
<feature type="helix" evidence="6">
    <location>
        <begin position="162"/>
        <end position="169"/>
    </location>
</feature>
<feature type="strand" evidence="6">
    <location>
        <begin position="173"/>
        <end position="180"/>
    </location>
</feature>
<feature type="helix" evidence="6">
    <location>
        <begin position="182"/>
        <end position="195"/>
    </location>
</feature>
<feature type="strand" evidence="6">
    <location>
        <begin position="199"/>
        <end position="204"/>
    </location>
</feature>
<feature type="helix" evidence="6">
    <location>
        <begin position="213"/>
        <end position="215"/>
    </location>
</feature>
<feature type="strand" evidence="6">
    <location>
        <begin position="219"/>
        <end position="224"/>
    </location>
</feature>
<feature type="helix" evidence="6">
    <location>
        <begin position="230"/>
        <end position="243"/>
    </location>
</feature>
<feature type="strand" evidence="6">
    <location>
        <begin position="250"/>
        <end position="255"/>
    </location>
</feature>
<feature type="strand" evidence="6">
    <location>
        <begin position="257"/>
        <end position="259"/>
    </location>
</feature>
<feature type="helix" evidence="6">
    <location>
        <begin position="262"/>
        <end position="274"/>
    </location>
</feature>
<feature type="strand" evidence="6">
    <location>
        <begin position="279"/>
        <end position="290"/>
    </location>
</feature>
<feature type="helix" evidence="6">
    <location>
        <begin position="296"/>
        <end position="298"/>
    </location>
</feature>
<feature type="helix" evidence="6">
    <location>
        <begin position="300"/>
        <end position="304"/>
    </location>
</feature>
<feature type="strand" evidence="6">
    <location>
        <begin position="317"/>
        <end position="324"/>
    </location>
</feature>
<feature type="helix" evidence="6">
    <location>
        <begin position="340"/>
        <end position="342"/>
    </location>
</feature>
<name>BPSA_THEKO</name>
<dbReference type="EC" id="2.5.1.128" evidence="1 2"/>
<dbReference type="EMBL" id="AP006878">
    <property type="protein sequence ID" value="BAD85880.1"/>
    <property type="molecule type" value="Genomic_DNA"/>
</dbReference>
<dbReference type="RefSeq" id="WP_011250642.1">
    <property type="nucleotide sequence ID" value="NC_006624.1"/>
</dbReference>
<dbReference type="PDB" id="5XNC">
    <property type="method" value="X-ray"/>
    <property type="resolution" value="1.84 A"/>
    <property type="chains" value="A/B/C/D/E/F/G=1-351"/>
</dbReference>
<dbReference type="PDB" id="5XNF">
    <property type="method" value="X-ray"/>
    <property type="resolution" value="1.90 A"/>
    <property type="chains" value="A/B=1-351"/>
</dbReference>
<dbReference type="PDB" id="5XNH">
    <property type="method" value="X-ray"/>
    <property type="resolution" value="1.95 A"/>
    <property type="chains" value="A/H=1-351"/>
</dbReference>
<dbReference type="PDB" id="6J26">
    <property type="method" value="X-ray"/>
    <property type="resolution" value="2.00 A"/>
    <property type="chains" value="A/B=1-351"/>
</dbReference>
<dbReference type="PDBsum" id="5XNC"/>
<dbReference type="PDBsum" id="5XNF"/>
<dbReference type="PDBsum" id="5XNH"/>
<dbReference type="PDBsum" id="6J26"/>
<dbReference type="SMR" id="Q5JIZ3"/>
<dbReference type="STRING" id="69014.TK1691"/>
<dbReference type="EnsemblBacteria" id="BAD85880">
    <property type="protein sequence ID" value="BAD85880"/>
    <property type="gene ID" value="TK1691"/>
</dbReference>
<dbReference type="GeneID" id="78448220"/>
<dbReference type="KEGG" id="tko:TK1691"/>
<dbReference type="PATRIC" id="fig|69014.16.peg.1649"/>
<dbReference type="eggNOG" id="arCOG00913">
    <property type="taxonomic scope" value="Archaea"/>
</dbReference>
<dbReference type="HOGENOM" id="CLU_042160_0_0_2"/>
<dbReference type="InParanoid" id="Q5JIZ3"/>
<dbReference type="OrthoDB" id="358909at2157"/>
<dbReference type="PhylomeDB" id="Q5JIZ3"/>
<dbReference type="BioCyc" id="MetaCyc:MONOMER-21054"/>
<dbReference type="BRENDA" id="2.5.1.128">
    <property type="organism ID" value="5246"/>
</dbReference>
<dbReference type="Proteomes" id="UP000000536">
    <property type="component" value="Chromosome"/>
</dbReference>
<dbReference type="GO" id="GO:0005737">
    <property type="term" value="C:cytoplasm"/>
    <property type="evidence" value="ECO:0007669"/>
    <property type="project" value="UniProtKB-SubCell"/>
</dbReference>
<dbReference type="GO" id="GO:0016740">
    <property type="term" value="F:transferase activity"/>
    <property type="evidence" value="ECO:0000318"/>
    <property type="project" value="GO_Central"/>
</dbReference>
<dbReference type="GO" id="GO:0016765">
    <property type="term" value="F:transferase activity, transferring alkyl or aryl (other than methyl) groups"/>
    <property type="evidence" value="ECO:0000314"/>
    <property type="project" value="UniProtKB"/>
</dbReference>
<dbReference type="GO" id="GO:0006596">
    <property type="term" value="P:polyamine biosynthetic process"/>
    <property type="evidence" value="ECO:0000314"/>
    <property type="project" value="UniProtKB"/>
</dbReference>
<dbReference type="CDD" id="cd02440">
    <property type="entry name" value="AdoMet_MTases"/>
    <property type="match status" value="1"/>
</dbReference>
<dbReference type="FunFam" id="3.40.50.150:FF:001144">
    <property type="entry name" value="N(4)-bis(aminopropyl)spermidine synthase"/>
    <property type="match status" value="1"/>
</dbReference>
<dbReference type="Gene3D" id="3.40.50.150">
    <property type="entry name" value="Vaccinia Virus protein VP39"/>
    <property type="match status" value="1"/>
</dbReference>
<dbReference type="Gene3D" id="1.10.10.10">
    <property type="entry name" value="Winged helix-like DNA-binding domain superfamily/Winged helix DNA-binding domain"/>
    <property type="match status" value="1"/>
</dbReference>
<dbReference type="HAMAP" id="MF_01947">
    <property type="entry name" value="Aminopropyltransf_BpsA"/>
    <property type="match status" value="1"/>
</dbReference>
<dbReference type="InterPro" id="IPR014435">
    <property type="entry name" value="BpsA"/>
</dbReference>
<dbReference type="InterPro" id="IPR002723">
    <property type="entry name" value="BpsA_C"/>
</dbReference>
<dbReference type="InterPro" id="IPR051720">
    <property type="entry name" value="rRNA_MeTrfase/Polyamine_Synth"/>
</dbReference>
<dbReference type="InterPro" id="IPR029063">
    <property type="entry name" value="SAM-dependent_MTases_sf"/>
</dbReference>
<dbReference type="InterPro" id="IPR036388">
    <property type="entry name" value="WH-like_DNA-bd_sf"/>
</dbReference>
<dbReference type="PANTHER" id="PTHR23290">
    <property type="entry name" value="RRNA N6-ADENOSINE-METHYLTRANSFERASE METTL5"/>
    <property type="match status" value="1"/>
</dbReference>
<dbReference type="PANTHER" id="PTHR23290:SF0">
    <property type="entry name" value="RRNA N6-ADENOSINE-METHYLTRANSFERASE METTL5"/>
    <property type="match status" value="1"/>
</dbReference>
<dbReference type="Pfam" id="PF01861">
    <property type="entry name" value="BpsA_C"/>
    <property type="match status" value="1"/>
</dbReference>
<dbReference type="PIRSF" id="PIRSF005895">
    <property type="entry name" value="UCP005895_mtase"/>
    <property type="match status" value="1"/>
</dbReference>
<dbReference type="SUPFAM" id="SSF53335">
    <property type="entry name" value="S-adenosyl-L-methionine-dependent methyltransferases"/>
    <property type="match status" value="1"/>
</dbReference>
<proteinExistence type="evidence at protein level"/>
<keyword id="KW-0002">3D-structure</keyword>
<keyword id="KW-0963">Cytoplasm</keyword>
<keyword id="KW-0620">Polyamine biosynthesis</keyword>
<keyword id="KW-1185">Reference proteome</keyword>
<keyword id="KW-0808">Transferase</keyword>